<keyword id="KW-0687">Ribonucleoprotein</keyword>
<keyword id="KW-0689">Ribosomal protein</keyword>
<keyword id="KW-0694">RNA-binding</keyword>
<keyword id="KW-0699">rRNA-binding</keyword>
<keyword id="KW-0820">tRNA-binding</keyword>
<reference key="1">
    <citation type="journal article" date="2013" name="Proc. Natl. Acad. Sci. U.S.A.">
        <title>Polynucleobacter necessarius, a model for genome reduction in both free-living and symbiotic bacteria.</title>
        <authorList>
            <person name="Boscaro V."/>
            <person name="Felletti M."/>
            <person name="Vannini C."/>
            <person name="Ackerman M.S."/>
            <person name="Chain P.S."/>
            <person name="Malfatti S."/>
            <person name="Vergez L.M."/>
            <person name="Shin M."/>
            <person name="Doak T.G."/>
            <person name="Lynch M."/>
            <person name="Petroni G."/>
        </authorList>
    </citation>
    <scope>NUCLEOTIDE SEQUENCE [LARGE SCALE GENOMIC DNA]</scope>
    <source>
        <strain>STIR1</strain>
    </source>
</reference>
<dbReference type="EMBL" id="CP001010">
    <property type="protein sequence ID" value="ACB43401.1"/>
    <property type="molecule type" value="Genomic_DNA"/>
</dbReference>
<dbReference type="SMR" id="B1XSS4"/>
<dbReference type="STRING" id="452638.Pnec_0073"/>
<dbReference type="KEGG" id="pne:Pnec_0073"/>
<dbReference type="eggNOG" id="COG0099">
    <property type="taxonomic scope" value="Bacteria"/>
</dbReference>
<dbReference type="HOGENOM" id="CLU_103849_1_2_4"/>
<dbReference type="OrthoDB" id="9803610at2"/>
<dbReference type="GO" id="GO:0005829">
    <property type="term" value="C:cytosol"/>
    <property type="evidence" value="ECO:0007669"/>
    <property type="project" value="TreeGrafter"/>
</dbReference>
<dbReference type="GO" id="GO:0015935">
    <property type="term" value="C:small ribosomal subunit"/>
    <property type="evidence" value="ECO:0007669"/>
    <property type="project" value="TreeGrafter"/>
</dbReference>
<dbReference type="GO" id="GO:0019843">
    <property type="term" value="F:rRNA binding"/>
    <property type="evidence" value="ECO:0007669"/>
    <property type="project" value="UniProtKB-UniRule"/>
</dbReference>
<dbReference type="GO" id="GO:0003735">
    <property type="term" value="F:structural constituent of ribosome"/>
    <property type="evidence" value="ECO:0007669"/>
    <property type="project" value="InterPro"/>
</dbReference>
<dbReference type="GO" id="GO:0000049">
    <property type="term" value="F:tRNA binding"/>
    <property type="evidence" value="ECO:0007669"/>
    <property type="project" value="UniProtKB-UniRule"/>
</dbReference>
<dbReference type="GO" id="GO:0006412">
    <property type="term" value="P:translation"/>
    <property type="evidence" value="ECO:0007669"/>
    <property type="project" value="UniProtKB-UniRule"/>
</dbReference>
<dbReference type="FunFam" id="1.10.8.50:FF:000001">
    <property type="entry name" value="30S ribosomal protein S13"/>
    <property type="match status" value="1"/>
</dbReference>
<dbReference type="FunFam" id="4.10.910.10:FF:000001">
    <property type="entry name" value="30S ribosomal protein S13"/>
    <property type="match status" value="1"/>
</dbReference>
<dbReference type="Gene3D" id="1.10.8.50">
    <property type="match status" value="1"/>
</dbReference>
<dbReference type="Gene3D" id="4.10.910.10">
    <property type="entry name" value="30s ribosomal protein s13, domain 2"/>
    <property type="match status" value="1"/>
</dbReference>
<dbReference type="HAMAP" id="MF_01315">
    <property type="entry name" value="Ribosomal_uS13"/>
    <property type="match status" value="1"/>
</dbReference>
<dbReference type="InterPro" id="IPR027437">
    <property type="entry name" value="Rbsml_uS13_C"/>
</dbReference>
<dbReference type="InterPro" id="IPR001892">
    <property type="entry name" value="Ribosomal_uS13"/>
</dbReference>
<dbReference type="InterPro" id="IPR010979">
    <property type="entry name" value="Ribosomal_uS13-like_H2TH"/>
</dbReference>
<dbReference type="InterPro" id="IPR019980">
    <property type="entry name" value="Ribosomal_uS13_bac-type"/>
</dbReference>
<dbReference type="InterPro" id="IPR018269">
    <property type="entry name" value="Ribosomal_uS13_CS"/>
</dbReference>
<dbReference type="NCBIfam" id="TIGR03631">
    <property type="entry name" value="uS13_bact"/>
    <property type="match status" value="1"/>
</dbReference>
<dbReference type="PANTHER" id="PTHR10871">
    <property type="entry name" value="30S RIBOSOMAL PROTEIN S13/40S RIBOSOMAL PROTEIN S18"/>
    <property type="match status" value="1"/>
</dbReference>
<dbReference type="PANTHER" id="PTHR10871:SF1">
    <property type="entry name" value="SMALL RIBOSOMAL SUBUNIT PROTEIN US13M"/>
    <property type="match status" value="1"/>
</dbReference>
<dbReference type="Pfam" id="PF00416">
    <property type="entry name" value="Ribosomal_S13"/>
    <property type="match status" value="1"/>
</dbReference>
<dbReference type="PIRSF" id="PIRSF002134">
    <property type="entry name" value="Ribosomal_S13"/>
    <property type="match status" value="1"/>
</dbReference>
<dbReference type="SUPFAM" id="SSF46946">
    <property type="entry name" value="S13-like H2TH domain"/>
    <property type="match status" value="1"/>
</dbReference>
<dbReference type="PROSITE" id="PS00646">
    <property type="entry name" value="RIBOSOMAL_S13_1"/>
    <property type="match status" value="1"/>
</dbReference>
<dbReference type="PROSITE" id="PS50159">
    <property type="entry name" value="RIBOSOMAL_S13_2"/>
    <property type="match status" value="1"/>
</dbReference>
<name>RS13_POLNS</name>
<gene>
    <name evidence="1" type="primary">rpsM</name>
    <name type="ordered locus">Pnec_0073</name>
</gene>
<evidence type="ECO:0000255" key="1">
    <source>
        <dbReference type="HAMAP-Rule" id="MF_01315"/>
    </source>
</evidence>
<evidence type="ECO:0000256" key="2">
    <source>
        <dbReference type="SAM" id="MobiDB-lite"/>
    </source>
</evidence>
<evidence type="ECO:0000305" key="3"/>
<proteinExistence type="inferred from homology"/>
<sequence>MARIAGVNIPNHQHTVIGLTAIFGIGTTRAHQICKTTGVAIDKKVKDLIDADLEKLRDEVGKFVTEGDLRREVTMSIKRLMDLGCYRGVRHRKDLPVRGQRTKTNARTRKGPRKSGVQLKK</sequence>
<feature type="chain" id="PRO_1000141299" description="Small ribosomal subunit protein uS13">
    <location>
        <begin position="1"/>
        <end position="121"/>
    </location>
</feature>
<feature type="region of interest" description="Disordered" evidence="2">
    <location>
        <begin position="94"/>
        <end position="121"/>
    </location>
</feature>
<feature type="compositionally biased region" description="Basic residues" evidence="2">
    <location>
        <begin position="100"/>
        <end position="121"/>
    </location>
</feature>
<protein>
    <recommendedName>
        <fullName evidence="1">Small ribosomal subunit protein uS13</fullName>
    </recommendedName>
    <alternativeName>
        <fullName evidence="3">30S ribosomal protein S13</fullName>
    </alternativeName>
</protein>
<accession>B1XSS4</accession>
<comment type="function">
    <text evidence="1">Located at the top of the head of the 30S subunit, it contacts several helices of the 16S rRNA. In the 70S ribosome it contacts the 23S rRNA (bridge B1a) and protein L5 of the 50S subunit (bridge B1b), connecting the 2 subunits; these bridges are implicated in subunit movement. Contacts the tRNAs in the A and P-sites.</text>
</comment>
<comment type="subunit">
    <text evidence="1">Part of the 30S ribosomal subunit. Forms a loose heterodimer with protein S19. Forms two bridges to the 50S subunit in the 70S ribosome.</text>
</comment>
<comment type="similarity">
    <text evidence="1">Belongs to the universal ribosomal protein uS13 family.</text>
</comment>
<organism>
    <name type="scientific">Polynucleobacter necessarius subsp. necessarius (strain STIR1)</name>
    <dbReference type="NCBI Taxonomy" id="452638"/>
    <lineage>
        <taxon>Bacteria</taxon>
        <taxon>Pseudomonadati</taxon>
        <taxon>Pseudomonadota</taxon>
        <taxon>Betaproteobacteria</taxon>
        <taxon>Burkholderiales</taxon>
        <taxon>Burkholderiaceae</taxon>
        <taxon>Polynucleobacter</taxon>
    </lineage>
</organism>